<sequence length="418" mass="48085">MEESESQAPVPPHGISLVSSPVRAVIRIRRKIRTMKKSRLQVDLTGERSLDSAKASLRRQISMDRASLFKSSTYEKQQYFNFDTPTLEKLALTSQIRKRNRNKSRHVLYPGNVRKCLPVEQKSKAKRCLLLFVGIVCFQIFNAIENLDDNLQKYDLDGLEKTLQREVFGQTRAIEKLMDHLKDYLATHYHNKPLVLSFNGPSGVGKSHTGRLLAKHFRSVVDNDFVLQYYTNHNCPNESDVIQCQAEVSAMISQMISRAEIEEKIPVFLFDEVEAMPVALLDVLHSYFQLNQSNEYLNVVYILISNIGGHEITKFVLQNVSNDFFNLPQELHQIVLSSLRKHHSLWDVAEIVPFTLLEKRHILDCFLDELLREGFYPDHSNIESLAGQLRYYIKGNKEFSISGCKQVVAKVNLLQPYT</sequence>
<name>TO4AB_XENLA</name>
<proteinExistence type="evidence at transcript level"/>
<gene>
    <name type="primary">tor4a-b</name>
</gene>
<keyword id="KW-0067">ATP-binding</keyword>
<keyword id="KW-0472">Membrane</keyword>
<keyword id="KW-0547">Nucleotide-binding</keyword>
<keyword id="KW-1185">Reference proteome</keyword>
<keyword id="KW-0812">Transmembrane</keyword>
<keyword id="KW-1133">Transmembrane helix</keyword>
<accession>Q3KQ18</accession>
<evidence type="ECO:0000255" key="1"/>
<evidence type="ECO:0000305" key="2"/>
<reference key="1">
    <citation type="submission" date="2005-10" db="EMBL/GenBank/DDBJ databases">
        <authorList>
            <consortium name="NIH - Xenopus Gene Collection (XGC) project"/>
        </authorList>
    </citation>
    <scope>NUCLEOTIDE SEQUENCE [LARGE SCALE MRNA]</scope>
    <source>
        <tissue>Embryo</tissue>
    </source>
</reference>
<dbReference type="EMBL" id="BC106423">
    <property type="protein sequence ID" value="AAI06424.1"/>
    <property type="molecule type" value="mRNA"/>
</dbReference>
<dbReference type="RefSeq" id="NP_001089731.1">
    <property type="nucleotide sequence ID" value="NM_001096262.1"/>
</dbReference>
<dbReference type="SMR" id="Q3KQ18"/>
<dbReference type="GeneID" id="734794"/>
<dbReference type="KEGG" id="xla:734794"/>
<dbReference type="AGR" id="Xenbase:XB-GENE-17333059"/>
<dbReference type="CTD" id="734794"/>
<dbReference type="Xenbase" id="XB-GENE-17333059">
    <property type="gene designation" value="tor4a.L"/>
</dbReference>
<dbReference type="OrthoDB" id="9443236at2759"/>
<dbReference type="Proteomes" id="UP000186698">
    <property type="component" value="Chromosome 8L"/>
</dbReference>
<dbReference type="Bgee" id="734794">
    <property type="expression patterns" value="Expressed in oocyte and 19 other cell types or tissues"/>
</dbReference>
<dbReference type="GO" id="GO:0005788">
    <property type="term" value="C:endoplasmic reticulum lumen"/>
    <property type="evidence" value="ECO:0000318"/>
    <property type="project" value="GO_Central"/>
</dbReference>
<dbReference type="GO" id="GO:0016020">
    <property type="term" value="C:membrane"/>
    <property type="evidence" value="ECO:0007669"/>
    <property type="project" value="UniProtKB-SubCell"/>
</dbReference>
<dbReference type="GO" id="GO:0005635">
    <property type="term" value="C:nuclear envelope"/>
    <property type="evidence" value="ECO:0000318"/>
    <property type="project" value="GO_Central"/>
</dbReference>
<dbReference type="GO" id="GO:0005524">
    <property type="term" value="F:ATP binding"/>
    <property type="evidence" value="ECO:0007669"/>
    <property type="project" value="UniProtKB-KW"/>
</dbReference>
<dbReference type="GO" id="GO:0016887">
    <property type="term" value="F:ATP hydrolysis activity"/>
    <property type="evidence" value="ECO:0007669"/>
    <property type="project" value="InterPro"/>
</dbReference>
<dbReference type="FunFam" id="3.40.50.300:FF:001429">
    <property type="entry name" value="Torsin family protein C9orf167-like"/>
    <property type="match status" value="1"/>
</dbReference>
<dbReference type="Gene3D" id="3.40.50.300">
    <property type="entry name" value="P-loop containing nucleotide triphosphate hydrolases"/>
    <property type="match status" value="1"/>
</dbReference>
<dbReference type="InterPro" id="IPR001270">
    <property type="entry name" value="ClpA/B"/>
</dbReference>
<dbReference type="InterPro" id="IPR027417">
    <property type="entry name" value="P-loop_NTPase"/>
</dbReference>
<dbReference type="InterPro" id="IPR049337">
    <property type="entry name" value="TOR1A_C"/>
</dbReference>
<dbReference type="InterPro" id="IPR010448">
    <property type="entry name" value="Torsin"/>
</dbReference>
<dbReference type="PANTHER" id="PTHR10760">
    <property type="entry name" value="TORSIN"/>
    <property type="match status" value="1"/>
</dbReference>
<dbReference type="PANTHER" id="PTHR10760:SF1">
    <property type="entry name" value="TORSIN-4A"/>
    <property type="match status" value="1"/>
</dbReference>
<dbReference type="Pfam" id="PF21376">
    <property type="entry name" value="TOR1A_C"/>
    <property type="match status" value="1"/>
</dbReference>
<dbReference type="Pfam" id="PF06309">
    <property type="entry name" value="Torsin"/>
    <property type="match status" value="1"/>
</dbReference>
<dbReference type="PRINTS" id="PR00300">
    <property type="entry name" value="CLPPROTEASEA"/>
</dbReference>
<dbReference type="SUPFAM" id="SSF52540">
    <property type="entry name" value="P-loop containing nucleoside triphosphate hydrolases"/>
    <property type="match status" value="1"/>
</dbReference>
<comment type="subcellular location">
    <subcellularLocation>
        <location evidence="2">Membrane</location>
        <topology evidence="2">Single-pass membrane protein</topology>
    </subcellularLocation>
</comment>
<comment type="similarity">
    <text evidence="2">Belongs to the ClpA/ClpB family. Torsin subfamily.</text>
</comment>
<protein>
    <recommendedName>
        <fullName>Torsin-4A-B</fullName>
    </recommendedName>
    <alternativeName>
        <fullName>Torsin family 4 member A-B</fullName>
    </alternativeName>
</protein>
<organism>
    <name type="scientific">Xenopus laevis</name>
    <name type="common">African clawed frog</name>
    <dbReference type="NCBI Taxonomy" id="8355"/>
    <lineage>
        <taxon>Eukaryota</taxon>
        <taxon>Metazoa</taxon>
        <taxon>Chordata</taxon>
        <taxon>Craniata</taxon>
        <taxon>Vertebrata</taxon>
        <taxon>Euteleostomi</taxon>
        <taxon>Amphibia</taxon>
        <taxon>Batrachia</taxon>
        <taxon>Anura</taxon>
        <taxon>Pipoidea</taxon>
        <taxon>Pipidae</taxon>
        <taxon>Xenopodinae</taxon>
        <taxon>Xenopus</taxon>
        <taxon>Xenopus</taxon>
    </lineage>
</organism>
<feature type="chain" id="PRO_0000287493" description="Torsin-4A-B">
    <location>
        <begin position="1"/>
        <end position="418"/>
    </location>
</feature>
<feature type="transmembrane region" description="Helical" evidence="1">
    <location>
        <begin position="128"/>
        <end position="144"/>
    </location>
</feature>
<feature type="binding site" evidence="1">
    <location>
        <begin position="200"/>
        <end position="207"/>
    </location>
    <ligand>
        <name>ATP</name>
        <dbReference type="ChEBI" id="CHEBI:30616"/>
    </ligand>
</feature>